<name>RL24_CITBB</name>
<organism>
    <name type="scientific">Citrifermentans bemidjiense (strain ATCC BAA-1014 / DSM 16622 / JCM 12645 / Bem)</name>
    <name type="common">Geobacter bemidjiensis</name>
    <dbReference type="NCBI Taxonomy" id="404380"/>
    <lineage>
        <taxon>Bacteria</taxon>
        <taxon>Pseudomonadati</taxon>
        <taxon>Thermodesulfobacteriota</taxon>
        <taxon>Desulfuromonadia</taxon>
        <taxon>Geobacterales</taxon>
        <taxon>Geobacteraceae</taxon>
        <taxon>Citrifermentans</taxon>
    </lineage>
</organism>
<gene>
    <name evidence="1" type="primary">rplX</name>
    <name type="ordered locus">Gbem_0944</name>
</gene>
<proteinExistence type="inferred from homology"/>
<accession>B5EFR1</accession>
<dbReference type="EMBL" id="CP001124">
    <property type="protein sequence ID" value="ACH37965.1"/>
    <property type="molecule type" value="Genomic_DNA"/>
</dbReference>
<dbReference type="RefSeq" id="WP_012529377.1">
    <property type="nucleotide sequence ID" value="NC_011146.1"/>
</dbReference>
<dbReference type="SMR" id="B5EFR1"/>
<dbReference type="STRING" id="404380.Gbem_0944"/>
<dbReference type="KEGG" id="gbm:Gbem_0944"/>
<dbReference type="eggNOG" id="COG0198">
    <property type="taxonomic scope" value="Bacteria"/>
</dbReference>
<dbReference type="HOGENOM" id="CLU_093315_2_3_7"/>
<dbReference type="OrthoDB" id="9807419at2"/>
<dbReference type="Proteomes" id="UP000008825">
    <property type="component" value="Chromosome"/>
</dbReference>
<dbReference type="GO" id="GO:1990904">
    <property type="term" value="C:ribonucleoprotein complex"/>
    <property type="evidence" value="ECO:0007669"/>
    <property type="project" value="UniProtKB-KW"/>
</dbReference>
<dbReference type="GO" id="GO:0005840">
    <property type="term" value="C:ribosome"/>
    <property type="evidence" value="ECO:0007669"/>
    <property type="project" value="UniProtKB-KW"/>
</dbReference>
<dbReference type="GO" id="GO:0019843">
    <property type="term" value="F:rRNA binding"/>
    <property type="evidence" value="ECO:0007669"/>
    <property type="project" value="UniProtKB-UniRule"/>
</dbReference>
<dbReference type="GO" id="GO:0003735">
    <property type="term" value="F:structural constituent of ribosome"/>
    <property type="evidence" value="ECO:0007669"/>
    <property type="project" value="InterPro"/>
</dbReference>
<dbReference type="GO" id="GO:0006412">
    <property type="term" value="P:translation"/>
    <property type="evidence" value="ECO:0007669"/>
    <property type="project" value="UniProtKB-UniRule"/>
</dbReference>
<dbReference type="CDD" id="cd06089">
    <property type="entry name" value="KOW_RPL26"/>
    <property type="match status" value="1"/>
</dbReference>
<dbReference type="FunFam" id="2.30.30.30:FF:000004">
    <property type="entry name" value="50S ribosomal protein L24"/>
    <property type="match status" value="1"/>
</dbReference>
<dbReference type="Gene3D" id="2.30.30.30">
    <property type="match status" value="1"/>
</dbReference>
<dbReference type="HAMAP" id="MF_01326_B">
    <property type="entry name" value="Ribosomal_uL24_B"/>
    <property type="match status" value="1"/>
</dbReference>
<dbReference type="InterPro" id="IPR005824">
    <property type="entry name" value="KOW"/>
</dbReference>
<dbReference type="InterPro" id="IPR014722">
    <property type="entry name" value="Rib_uL2_dom2"/>
</dbReference>
<dbReference type="InterPro" id="IPR003256">
    <property type="entry name" value="Ribosomal_uL24"/>
</dbReference>
<dbReference type="InterPro" id="IPR041988">
    <property type="entry name" value="Ribosomal_uL24_KOW"/>
</dbReference>
<dbReference type="InterPro" id="IPR008991">
    <property type="entry name" value="Translation_prot_SH3-like_sf"/>
</dbReference>
<dbReference type="NCBIfam" id="TIGR01079">
    <property type="entry name" value="rplX_bact"/>
    <property type="match status" value="1"/>
</dbReference>
<dbReference type="PANTHER" id="PTHR12903">
    <property type="entry name" value="MITOCHONDRIAL RIBOSOMAL PROTEIN L24"/>
    <property type="match status" value="1"/>
</dbReference>
<dbReference type="Pfam" id="PF00467">
    <property type="entry name" value="KOW"/>
    <property type="match status" value="1"/>
</dbReference>
<dbReference type="Pfam" id="PF17136">
    <property type="entry name" value="ribosomal_L24"/>
    <property type="match status" value="1"/>
</dbReference>
<dbReference type="SMART" id="SM00739">
    <property type="entry name" value="KOW"/>
    <property type="match status" value="1"/>
</dbReference>
<dbReference type="SUPFAM" id="SSF50104">
    <property type="entry name" value="Translation proteins SH3-like domain"/>
    <property type="match status" value="1"/>
</dbReference>
<feature type="chain" id="PRO_1000142001" description="Large ribosomal subunit protein uL24">
    <location>
        <begin position="1"/>
        <end position="108"/>
    </location>
</feature>
<protein>
    <recommendedName>
        <fullName evidence="1">Large ribosomal subunit protein uL24</fullName>
    </recommendedName>
    <alternativeName>
        <fullName evidence="2">50S ribosomal protein L24</fullName>
    </alternativeName>
</protein>
<sequence length="108" mass="11772">MLGKKLHVKKNDTVVVIAGKDRSKSGKVISIHPKKDGVIVEGVNVVKRHQKPRGSEQGGILEKEAPVHISNVMLLCGKCNKPVRTKTTVLEDGKKARCCVKCGESFDK</sequence>
<keyword id="KW-1185">Reference proteome</keyword>
<keyword id="KW-0687">Ribonucleoprotein</keyword>
<keyword id="KW-0689">Ribosomal protein</keyword>
<keyword id="KW-0694">RNA-binding</keyword>
<keyword id="KW-0699">rRNA-binding</keyword>
<comment type="function">
    <text evidence="1">One of two assembly initiator proteins, it binds directly to the 5'-end of the 23S rRNA, where it nucleates assembly of the 50S subunit.</text>
</comment>
<comment type="function">
    <text evidence="1">One of the proteins that surrounds the polypeptide exit tunnel on the outside of the subunit.</text>
</comment>
<comment type="subunit">
    <text evidence="1">Part of the 50S ribosomal subunit.</text>
</comment>
<comment type="similarity">
    <text evidence="1">Belongs to the universal ribosomal protein uL24 family.</text>
</comment>
<reference key="1">
    <citation type="submission" date="2008-07" db="EMBL/GenBank/DDBJ databases">
        <title>Complete sequence of Geobacter bemidjiensis BEM.</title>
        <authorList>
            <consortium name="US DOE Joint Genome Institute"/>
            <person name="Lucas S."/>
            <person name="Copeland A."/>
            <person name="Lapidus A."/>
            <person name="Glavina del Rio T."/>
            <person name="Dalin E."/>
            <person name="Tice H."/>
            <person name="Bruce D."/>
            <person name="Goodwin L."/>
            <person name="Pitluck S."/>
            <person name="Kiss H."/>
            <person name="Brettin T."/>
            <person name="Detter J.C."/>
            <person name="Han C."/>
            <person name="Kuske C.R."/>
            <person name="Schmutz J."/>
            <person name="Larimer F."/>
            <person name="Land M."/>
            <person name="Hauser L."/>
            <person name="Kyrpides N."/>
            <person name="Lykidis A."/>
            <person name="Lovley D."/>
            <person name="Richardson P."/>
        </authorList>
    </citation>
    <scope>NUCLEOTIDE SEQUENCE [LARGE SCALE GENOMIC DNA]</scope>
    <source>
        <strain>ATCC BAA-1014 / DSM 16622 / JCM 12645 / Bem</strain>
    </source>
</reference>
<evidence type="ECO:0000255" key="1">
    <source>
        <dbReference type="HAMAP-Rule" id="MF_01326"/>
    </source>
</evidence>
<evidence type="ECO:0000305" key="2"/>